<keyword id="KW-0030">Aminoacyl-tRNA synthetase</keyword>
<keyword id="KW-0067">ATP-binding</keyword>
<keyword id="KW-0963">Cytoplasm</keyword>
<keyword id="KW-0436">Ligase</keyword>
<keyword id="KW-0547">Nucleotide-binding</keyword>
<keyword id="KW-0648">Protein biosynthesis</keyword>
<protein>
    <recommendedName>
        <fullName evidence="1">Proline--tRNA ligase</fullName>
        <ecNumber evidence="1">6.1.1.15</ecNumber>
    </recommendedName>
    <alternativeName>
        <fullName evidence="1">Prolyl-tRNA synthetase</fullName>
        <shortName evidence="1">ProRS</shortName>
    </alternativeName>
</protein>
<gene>
    <name evidence="1" type="primary">proS</name>
    <name type="ordered locus">CAB240</name>
</gene>
<name>SYP_CHLAB</name>
<organism>
    <name type="scientific">Chlamydia abortus (strain DSM 27085 / S26/3)</name>
    <name type="common">Chlamydophila abortus</name>
    <dbReference type="NCBI Taxonomy" id="218497"/>
    <lineage>
        <taxon>Bacteria</taxon>
        <taxon>Pseudomonadati</taxon>
        <taxon>Chlamydiota</taxon>
        <taxon>Chlamydiia</taxon>
        <taxon>Chlamydiales</taxon>
        <taxon>Chlamydiaceae</taxon>
        <taxon>Chlamydia/Chlamydophila group</taxon>
        <taxon>Chlamydia</taxon>
    </lineage>
</organism>
<comment type="function">
    <text evidence="1">Catalyzes the attachment of proline to tRNA(Pro) in a two-step reaction: proline is first activated by ATP to form Pro-AMP and then transferred to the acceptor end of tRNA(Pro). As ProRS can inadvertently accommodate and process non-cognate amino acids such as alanine and cysteine, to avoid such errors it has two additional distinct editing activities against alanine. One activity is designated as 'pretransfer' editing and involves the tRNA(Pro)-independent hydrolysis of activated Ala-AMP. The other activity is designated 'posttransfer' editing and involves deacylation of mischarged Ala-tRNA(Pro). The misacylated Cys-tRNA(Pro) is not edited by ProRS.</text>
</comment>
<comment type="catalytic activity">
    <reaction evidence="1">
        <text>tRNA(Pro) + L-proline + ATP = L-prolyl-tRNA(Pro) + AMP + diphosphate</text>
        <dbReference type="Rhea" id="RHEA:14305"/>
        <dbReference type="Rhea" id="RHEA-COMP:9700"/>
        <dbReference type="Rhea" id="RHEA-COMP:9702"/>
        <dbReference type="ChEBI" id="CHEBI:30616"/>
        <dbReference type="ChEBI" id="CHEBI:33019"/>
        <dbReference type="ChEBI" id="CHEBI:60039"/>
        <dbReference type="ChEBI" id="CHEBI:78442"/>
        <dbReference type="ChEBI" id="CHEBI:78532"/>
        <dbReference type="ChEBI" id="CHEBI:456215"/>
        <dbReference type="EC" id="6.1.1.15"/>
    </reaction>
</comment>
<comment type="subunit">
    <text evidence="1">Homodimer.</text>
</comment>
<comment type="subcellular location">
    <subcellularLocation>
        <location evidence="1">Cytoplasm</location>
    </subcellularLocation>
</comment>
<comment type="domain">
    <text evidence="1">Consists of three domains: the N-terminal catalytic domain, the editing domain and the C-terminal anticodon-binding domain.</text>
</comment>
<comment type="similarity">
    <text evidence="1">Belongs to the class-II aminoacyl-tRNA synthetase family. ProS type 1 subfamily.</text>
</comment>
<dbReference type="EC" id="6.1.1.15" evidence="1"/>
<dbReference type="EMBL" id="CR848038">
    <property type="protein sequence ID" value="CAH63696.1"/>
    <property type="molecule type" value="Genomic_DNA"/>
</dbReference>
<dbReference type="RefSeq" id="WP_011096926.1">
    <property type="nucleotide sequence ID" value="NC_004552.2"/>
</dbReference>
<dbReference type="SMR" id="Q5L6M5"/>
<dbReference type="KEGG" id="cab:CAB240"/>
<dbReference type="eggNOG" id="COG0442">
    <property type="taxonomic scope" value="Bacteria"/>
</dbReference>
<dbReference type="HOGENOM" id="CLU_016739_0_0_0"/>
<dbReference type="OrthoDB" id="9809052at2"/>
<dbReference type="Proteomes" id="UP000001012">
    <property type="component" value="Chromosome"/>
</dbReference>
<dbReference type="GO" id="GO:0005829">
    <property type="term" value="C:cytosol"/>
    <property type="evidence" value="ECO:0007669"/>
    <property type="project" value="TreeGrafter"/>
</dbReference>
<dbReference type="GO" id="GO:0002161">
    <property type="term" value="F:aminoacyl-tRNA deacylase activity"/>
    <property type="evidence" value="ECO:0007669"/>
    <property type="project" value="InterPro"/>
</dbReference>
<dbReference type="GO" id="GO:0005524">
    <property type="term" value="F:ATP binding"/>
    <property type="evidence" value="ECO:0007669"/>
    <property type="project" value="UniProtKB-UniRule"/>
</dbReference>
<dbReference type="GO" id="GO:0004827">
    <property type="term" value="F:proline-tRNA ligase activity"/>
    <property type="evidence" value="ECO:0007669"/>
    <property type="project" value="UniProtKB-UniRule"/>
</dbReference>
<dbReference type="GO" id="GO:0006433">
    <property type="term" value="P:prolyl-tRNA aminoacylation"/>
    <property type="evidence" value="ECO:0007669"/>
    <property type="project" value="UniProtKB-UniRule"/>
</dbReference>
<dbReference type="CDD" id="cd04334">
    <property type="entry name" value="ProRS-INS"/>
    <property type="match status" value="1"/>
</dbReference>
<dbReference type="CDD" id="cd00861">
    <property type="entry name" value="ProRS_anticodon_short"/>
    <property type="match status" value="1"/>
</dbReference>
<dbReference type="CDD" id="cd00779">
    <property type="entry name" value="ProRS_core_prok"/>
    <property type="match status" value="1"/>
</dbReference>
<dbReference type="Gene3D" id="3.40.50.800">
    <property type="entry name" value="Anticodon-binding domain"/>
    <property type="match status" value="1"/>
</dbReference>
<dbReference type="Gene3D" id="3.30.930.10">
    <property type="entry name" value="Bira Bifunctional Protein, Domain 2"/>
    <property type="match status" value="2"/>
</dbReference>
<dbReference type="Gene3D" id="3.90.960.10">
    <property type="entry name" value="YbaK/aminoacyl-tRNA synthetase-associated domain"/>
    <property type="match status" value="1"/>
</dbReference>
<dbReference type="HAMAP" id="MF_01569">
    <property type="entry name" value="Pro_tRNA_synth_type1"/>
    <property type="match status" value="1"/>
</dbReference>
<dbReference type="InterPro" id="IPR002314">
    <property type="entry name" value="aa-tRNA-synt_IIb"/>
</dbReference>
<dbReference type="InterPro" id="IPR006195">
    <property type="entry name" value="aa-tRNA-synth_II"/>
</dbReference>
<dbReference type="InterPro" id="IPR045864">
    <property type="entry name" value="aa-tRNA-synth_II/BPL/LPL"/>
</dbReference>
<dbReference type="InterPro" id="IPR004154">
    <property type="entry name" value="Anticodon-bd"/>
</dbReference>
<dbReference type="InterPro" id="IPR036621">
    <property type="entry name" value="Anticodon-bd_dom_sf"/>
</dbReference>
<dbReference type="InterPro" id="IPR002316">
    <property type="entry name" value="Pro-tRNA-ligase_IIa"/>
</dbReference>
<dbReference type="InterPro" id="IPR004500">
    <property type="entry name" value="Pro-tRNA-synth_IIa_bac-type"/>
</dbReference>
<dbReference type="InterPro" id="IPR023717">
    <property type="entry name" value="Pro-tRNA-Synthase_IIa_type1"/>
</dbReference>
<dbReference type="InterPro" id="IPR050062">
    <property type="entry name" value="Pro-tRNA_synthetase"/>
</dbReference>
<dbReference type="InterPro" id="IPR044140">
    <property type="entry name" value="ProRS_anticodon_short"/>
</dbReference>
<dbReference type="InterPro" id="IPR033730">
    <property type="entry name" value="ProRS_core_prok"/>
</dbReference>
<dbReference type="InterPro" id="IPR036754">
    <property type="entry name" value="YbaK/aa-tRNA-synt-asso_dom_sf"/>
</dbReference>
<dbReference type="InterPro" id="IPR007214">
    <property type="entry name" value="YbaK/aa-tRNA-synth-assoc-dom"/>
</dbReference>
<dbReference type="NCBIfam" id="NF006625">
    <property type="entry name" value="PRK09194.1"/>
    <property type="match status" value="1"/>
</dbReference>
<dbReference type="NCBIfam" id="TIGR00409">
    <property type="entry name" value="proS_fam_II"/>
    <property type="match status" value="1"/>
</dbReference>
<dbReference type="PANTHER" id="PTHR42753">
    <property type="entry name" value="MITOCHONDRIAL RIBOSOME PROTEIN L39/PROLYL-TRNA LIGASE FAMILY MEMBER"/>
    <property type="match status" value="1"/>
</dbReference>
<dbReference type="PANTHER" id="PTHR42753:SF2">
    <property type="entry name" value="PROLINE--TRNA LIGASE"/>
    <property type="match status" value="1"/>
</dbReference>
<dbReference type="Pfam" id="PF03129">
    <property type="entry name" value="HGTP_anticodon"/>
    <property type="match status" value="1"/>
</dbReference>
<dbReference type="Pfam" id="PF00587">
    <property type="entry name" value="tRNA-synt_2b"/>
    <property type="match status" value="1"/>
</dbReference>
<dbReference type="Pfam" id="PF04073">
    <property type="entry name" value="tRNA_edit"/>
    <property type="match status" value="1"/>
</dbReference>
<dbReference type="PRINTS" id="PR01046">
    <property type="entry name" value="TRNASYNTHPRO"/>
</dbReference>
<dbReference type="SUPFAM" id="SSF52954">
    <property type="entry name" value="Class II aaRS ABD-related"/>
    <property type="match status" value="1"/>
</dbReference>
<dbReference type="SUPFAM" id="SSF55681">
    <property type="entry name" value="Class II aaRS and biotin synthetases"/>
    <property type="match status" value="1"/>
</dbReference>
<dbReference type="SUPFAM" id="SSF55826">
    <property type="entry name" value="YbaK/ProRS associated domain"/>
    <property type="match status" value="1"/>
</dbReference>
<dbReference type="PROSITE" id="PS50862">
    <property type="entry name" value="AA_TRNA_LIGASE_II"/>
    <property type="match status" value="1"/>
</dbReference>
<reference key="1">
    <citation type="journal article" date="2005" name="Genome Res.">
        <title>The Chlamydophila abortus genome sequence reveals an array of variable proteins that contribute to interspecies variation.</title>
        <authorList>
            <person name="Thomson N.R."/>
            <person name="Yeats C."/>
            <person name="Bell K."/>
            <person name="Holden M.T.G."/>
            <person name="Bentley S.D."/>
            <person name="Livingstone M."/>
            <person name="Cerdeno-Tarraga A.-M."/>
            <person name="Harris B."/>
            <person name="Doggett J."/>
            <person name="Ormond D."/>
            <person name="Mungall K."/>
            <person name="Clarke K."/>
            <person name="Feltwell T."/>
            <person name="Hance Z."/>
            <person name="Sanders M."/>
            <person name="Quail M.A."/>
            <person name="Price C."/>
            <person name="Barrell B.G."/>
            <person name="Parkhill J."/>
            <person name="Longbottom D."/>
        </authorList>
    </citation>
    <scope>NUCLEOTIDE SEQUENCE [LARGE SCALE GENOMIC DNA]</scope>
    <source>
        <strain>DSM 27085 / S26/3</strain>
    </source>
</reference>
<accession>Q5L6M5</accession>
<feature type="chain" id="PRO_0000248667" description="Proline--tRNA ligase">
    <location>
        <begin position="1"/>
        <end position="577"/>
    </location>
</feature>
<proteinExistence type="inferred from homology"/>
<evidence type="ECO:0000255" key="1">
    <source>
        <dbReference type="HAMAP-Rule" id="MF_01569"/>
    </source>
</evidence>
<sequence>MKTSQLFYKTSKNANKEASVLSYELLEKAGYIFKTAKGIYTYTPLFWRVALKMMDIIREELNAIGGQELVLPILHPAELWQKTGRWEAFRSEGLLYTVKDREDKEFCLAPTHEEIVSMFVSQWLSGRKQLPIHLYQIATKFRDEIRPRFGLMRAKEFLMEDSYTFSDSPEQMNEQYAKLRQAYQNIFDRLEIQYVIVEADGGKIGKGKSEEFHVLSSLGEDTLCVSGHYGANIEAAVAQPPQYTYDKDYLPIEEVDTPDVRTIENLQDFFSVPPYRIMKTLVVKLSYGEKEKFTAIGIRGDRQINLTKIGSKLNADACSLASDEEIQKHLGVEKGFIGPLNCPIDFYADETTQCMTNFICAGNVKDKHYKNVNWDRDIPRPEYADFLLAEAGDLCPTNNHAPYEIFEGVEVAHIFNLGTRYTEGFDVVFQDEQGKPQSCWMGTYGIGIGRTLAACIEQLADDRGIVWPKAIAPFDISILYNGGDTACEEAAEKIYKELQGYGYAPLLDDRNERLGFKLKDSDLIGIPYKLILGKTFLNSGMLEIESRSIEKFSVEPKDFVHWCKRHLPSPRVFSPIP</sequence>